<feature type="signal peptide" evidence="1">
    <location>
        <begin position="1"/>
        <end position="17"/>
    </location>
</feature>
<feature type="propeptide" id="PRO_0000004900">
    <location>
        <begin position="18"/>
        <end position="46"/>
    </location>
</feature>
<feature type="chain" id="PRO_0000004901" description="Attacin-B">
    <location>
        <begin position="47"/>
        <end position="233"/>
    </location>
</feature>
<feature type="sequence conflict" description="In Ref. 4; CAA25365/AAA29182." evidence="2" ref="4">
    <original>L</original>
    <variation>V</variation>
    <location>
        <position position="11"/>
    </location>
</feature>
<feature type="sequence conflict" description="In Ref. 3; CAA44179." evidence="2" ref="3">
    <original>V</original>
    <variation>G</variation>
    <location>
        <position position="101"/>
    </location>
</feature>
<proteinExistence type="evidence at transcript level"/>
<sequence>MFAKLFLVSVLLVGVNSRYVLVEEPGYYDKQYEEQPQQWVNSRVRRQAGALTINSDGTSGAVVKVPITGNENHKFSALGSVDLTNQMKLGAATAGLAYDNVNGHGATLTKTHIPGFGDKMTAAGKVNLFHNDNHDFSAKAFATKNMPNIPQVPNFNTVGAGVDYMFKDKIGASANAAHTDFINRNDYSLGGKLNLFKTPTTSLDFNAGWKKFDTPFFKSSWEPSTSFSFSKYF</sequence>
<dbReference type="EMBL" id="X17619">
    <property type="protein sequence ID" value="CAA35620.1"/>
    <property type="molecule type" value="mRNA"/>
</dbReference>
<dbReference type="EMBL" id="X00787">
    <property type="protein sequence ID" value="CAA25365.1"/>
    <property type="molecule type" value="mRNA"/>
</dbReference>
<dbReference type="EMBL" id="X62290">
    <property type="protein sequence ID" value="CAA44179.1"/>
    <property type="molecule type" value="Genomic_DNA"/>
</dbReference>
<dbReference type="EMBL" id="M34925">
    <property type="protein sequence ID" value="AAA29182.1"/>
    <property type="molecule type" value="mRNA"/>
</dbReference>
<dbReference type="PIR" id="S12199">
    <property type="entry name" value="EWWKBC"/>
</dbReference>
<dbReference type="GO" id="GO:0005576">
    <property type="term" value="C:extracellular region"/>
    <property type="evidence" value="ECO:0007669"/>
    <property type="project" value="UniProtKB-SubCell"/>
</dbReference>
<dbReference type="GO" id="GO:0042742">
    <property type="term" value="P:defense response to bacterium"/>
    <property type="evidence" value="ECO:0007669"/>
    <property type="project" value="UniProtKB-KW"/>
</dbReference>
<dbReference type="GO" id="GO:0045087">
    <property type="term" value="P:innate immune response"/>
    <property type="evidence" value="ECO:0007669"/>
    <property type="project" value="UniProtKB-KW"/>
</dbReference>
<dbReference type="InterPro" id="IPR005521">
    <property type="entry name" value="Attacin_C"/>
</dbReference>
<dbReference type="InterPro" id="IPR005520">
    <property type="entry name" value="Attacin_N"/>
</dbReference>
<dbReference type="Pfam" id="PF03769">
    <property type="entry name" value="Attacin_C"/>
    <property type="match status" value="1"/>
</dbReference>
<dbReference type="Pfam" id="PF03768">
    <property type="entry name" value="Attacin_N"/>
    <property type="match status" value="1"/>
</dbReference>
<organism>
    <name type="scientific">Hyalophora cecropia</name>
    <name type="common">Cecropia moth</name>
    <name type="synonym">Samia cecropia</name>
    <dbReference type="NCBI Taxonomy" id="7123"/>
    <lineage>
        <taxon>Eukaryota</taxon>
        <taxon>Metazoa</taxon>
        <taxon>Ecdysozoa</taxon>
        <taxon>Arthropoda</taxon>
        <taxon>Hexapoda</taxon>
        <taxon>Insecta</taxon>
        <taxon>Pterygota</taxon>
        <taxon>Neoptera</taxon>
        <taxon>Endopterygota</taxon>
        <taxon>Lepidoptera</taxon>
        <taxon>Glossata</taxon>
        <taxon>Ditrysia</taxon>
        <taxon>Bombycoidea</taxon>
        <taxon>Saturniidae</taxon>
        <taxon>Saturniinae</taxon>
        <taxon>Attacini</taxon>
        <taxon>Hyalophora</taxon>
    </lineage>
</organism>
<evidence type="ECO:0000255" key="1"/>
<evidence type="ECO:0000305" key="2"/>
<protein>
    <recommendedName>
        <fullName>Attacin-B</fullName>
    </recommendedName>
    <alternativeName>
        <fullName>Immune protein P5</fullName>
    </alternativeName>
</protein>
<comment type="function">
    <text>Hemolymph antibacterial protein.</text>
</comment>
<comment type="subcellular location">
    <subcellularLocation>
        <location>Secreted</location>
    </subcellularLocation>
</comment>
<comment type="miscellaneous">
    <text>There are six forms of attacin that are divided into two groups: acidic (E and F) and basic (A, B, C, and D).</text>
</comment>
<comment type="similarity">
    <text evidence="2">Belongs to the attacin/sarcotoxin-2 family.</text>
</comment>
<accession>P01512</accession>
<reference key="1">
    <citation type="journal article" date="1990" name="Eur. J. Biochem.">
        <title>Structure of preproattacin and its processing in insect cells infected with a recombinant baculovirus.</title>
        <authorList>
            <person name="Gunne H."/>
            <person name="Hellers M."/>
            <person name="Steiner H."/>
        </authorList>
    </citation>
    <scope>NUCLEOTIDE SEQUENCE [MRNA]</scope>
    <source>
        <tissue>Fat body</tissue>
    </source>
</reference>
<reference key="2">
    <citation type="journal article" date="1985" name="Dev. Comp. Immunol.">
        <title>On the primary structures of lysozyme, cecropins and attacins from Hyalophora cecropia.</title>
        <authorList>
            <person name="Boman H.G."/>
            <person name="Faye I."/>
            <person name="von Hofsten P."/>
            <person name="Kockum K."/>
            <person name="Lee J.-Y."/>
            <person name="Xanthopoulos K.G."/>
            <person name="Bennich H."/>
            <person name="Engstroem A."/>
            <person name="Merrifield R.B."/>
            <person name="Andreu D."/>
        </authorList>
    </citation>
    <scope>NUCLEOTIDE SEQUENCE [MRNA]</scope>
</reference>
<reference key="3">
    <citation type="journal article" date="1991" name="Eur. J. Biochem.">
        <title>Structure and expression of the attacin genes in Hyalophora cecropia.</title>
        <authorList>
            <person name="Sun S.C."/>
            <person name="Lindstroem I."/>
            <person name="Lee J.-Y."/>
            <person name="Faye I."/>
        </authorList>
    </citation>
    <scope>NUCLEOTIDE SEQUENCE [GENOMIC DNA]</scope>
</reference>
<reference key="4">
    <citation type="journal article" date="1984" name="EMBO J.">
        <title>Insect immunity. Isolation and sequence of two cDNA clones corresponding to acidic and basic attacins from Hyalophora cecropia.</title>
        <authorList>
            <person name="Kockum K."/>
            <person name="Faye I."/>
            <person name="von Hofsten P."/>
            <person name="Lee J.-Y."/>
            <person name="Xanthopoulos K.G."/>
            <person name="Boman H.G."/>
        </authorList>
    </citation>
    <scope>NUCLEOTIDE SEQUENCE [MRNA] OF 11-233</scope>
</reference>
<keyword id="KW-0044">Antibiotic</keyword>
<keyword id="KW-0929">Antimicrobial</keyword>
<keyword id="KW-0165">Cleavage on pair of basic residues</keyword>
<keyword id="KW-0391">Immunity</keyword>
<keyword id="KW-0399">Innate immunity</keyword>
<keyword id="KW-0677">Repeat</keyword>
<keyword id="KW-0964">Secreted</keyword>
<keyword id="KW-0732">Signal</keyword>
<name>ATTB_HYACE</name>